<dbReference type="EMBL" id="CP017623">
    <property type="protein sequence ID" value="AOW26088.1"/>
    <property type="molecule type" value="Genomic_DNA"/>
</dbReference>
<dbReference type="RefSeq" id="XP_713651.2">
    <property type="nucleotide sequence ID" value="XM_708558.2"/>
</dbReference>
<dbReference type="SMR" id="Q59VP7"/>
<dbReference type="BioGRID" id="1227765">
    <property type="interactions" value="2"/>
</dbReference>
<dbReference type="FunCoup" id="Q59VP7">
    <property type="interactions" value="1103"/>
</dbReference>
<dbReference type="STRING" id="237561.Q59VP7"/>
<dbReference type="EnsemblFungi" id="C1_04130W_A-T">
    <property type="protein sequence ID" value="C1_04130W_A-T-p1"/>
    <property type="gene ID" value="C1_04130W_A"/>
</dbReference>
<dbReference type="GeneID" id="3644702"/>
<dbReference type="KEGG" id="cal:CAALFM_C104130WA"/>
<dbReference type="CGD" id="CAL0000194713">
    <property type="gene designation" value="ERB1"/>
</dbReference>
<dbReference type="VEuPathDB" id="FungiDB:C1_04130W_A"/>
<dbReference type="eggNOG" id="KOG0650">
    <property type="taxonomic scope" value="Eukaryota"/>
</dbReference>
<dbReference type="HOGENOM" id="CLU_011390_0_1_1"/>
<dbReference type="InParanoid" id="Q59VP7"/>
<dbReference type="OMA" id="MRPAKGE"/>
<dbReference type="OrthoDB" id="5571054at2759"/>
<dbReference type="PRO" id="PR:Q59VP7"/>
<dbReference type="Proteomes" id="UP000000559">
    <property type="component" value="Chromosome 1"/>
</dbReference>
<dbReference type="GO" id="GO:0005654">
    <property type="term" value="C:nucleoplasm"/>
    <property type="evidence" value="ECO:0007669"/>
    <property type="project" value="UniProtKB-SubCell"/>
</dbReference>
<dbReference type="GO" id="GO:0070545">
    <property type="term" value="C:PeBoW complex"/>
    <property type="evidence" value="ECO:0000318"/>
    <property type="project" value="GO_Central"/>
</dbReference>
<dbReference type="GO" id="GO:0030687">
    <property type="term" value="C:preribosome, large subunit precursor"/>
    <property type="evidence" value="ECO:0000318"/>
    <property type="project" value="GO_Central"/>
</dbReference>
<dbReference type="GO" id="GO:0070180">
    <property type="term" value="F:large ribosomal subunit rRNA binding"/>
    <property type="evidence" value="ECO:0007669"/>
    <property type="project" value="EnsemblFungi"/>
</dbReference>
<dbReference type="GO" id="GO:0043021">
    <property type="term" value="F:ribonucleoprotein complex binding"/>
    <property type="evidence" value="ECO:0000318"/>
    <property type="project" value="GO_Central"/>
</dbReference>
<dbReference type="GO" id="GO:0000466">
    <property type="term" value="P:maturation of 5.8S rRNA from tricistronic rRNA transcript (SSU-rRNA, 5.8S rRNA, LSU-rRNA)"/>
    <property type="evidence" value="ECO:0007669"/>
    <property type="project" value="UniProtKB-UniRule"/>
</dbReference>
<dbReference type="GO" id="GO:0000463">
    <property type="term" value="P:maturation of LSU-rRNA from tricistronic rRNA transcript (SSU-rRNA, 5.8S rRNA, LSU-rRNA)"/>
    <property type="evidence" value="ECO:0000318"/>
    <property type="project" value="GO_Central"/>
</dbReference>
<dbReference type="Gene3D" id="2.130.10.10">
    <property type="entry name" value="YVTN repeat-like/Quinoprotein amine dehydrogenase"/>
    <property type="match status" value="2"/>
</dbReference>
<dbReference type="HAMAP" id="MF_03027">
    <property type="entry name" value="BOP1"/>
    <property type="match status" value="1"/>
</dbReference>
<dbReference type="InterPro" id="IPR028598">
    <property type="entry name" value="BOP1/Erb1"/>
</dbReference>
<dbReference type="InterPro" id="IPR012953">
    <property type="entry name" value="BOP1_N_dom"/>
</dbReference>
<dbReference type="InterPro" id="IPR015943">
    <property type="entry name" value="WD40/YVTN_repeat-like_dom_sf"/>
</dbReference>
<dbReference type="InterPro" id="IPR019775">
    <property type="entry name" value="WD40_repeat_CS"/>
</dbReference>
<dbReference type="InterPro" id="IPR036322">
    <property type="entry name" value="WD40_repeat_dom_sf"/>
</dbReference>
<dbReference type="InterPro" id="IPR001680">
    <property type="entry name" value="WD40_rpt"/>
</dbReference>
<dbReference type="PANTHER" id="PTHR17605:SF0">
    <property type="entry name" value="RIBOSOME BIOGENESIS PROTEIN BOP1"/>
    <property type="match status" value="1"/>
</dbReference>
<dbReference type="PANTHER" id="PTHR17605">
    <property type="entry name" value="RIBOSOME BIOGENESIS PROTEIN BOP1 BLOCK OF PROLIFERATION 1 PROTEIN"/>
    <property type="match status" value="1"/>
</dbReference>
<dbReference type="Pfam" id="PF08145">
    <property type="entry name" value="BOP1NT"/>
    <property type="match status" value="1"/>
</dbReference>
<dbReference type="Pfam" id="PF00400">
    <property type="entry name" value="WD40"/>
    <property type="match status" value="3"/>
</dbReference>
<dbReference type="SMART" id="SM01035">
    <property type="entry name" value="BOP1NT"/>
    <property type="match status" value="1"/>
</dbReference>
<dbReference type="SMART" id="SM00320">
    <property type="entry name" value="WD40"/>
    <property type="match status" value="7"/>
</dbReference>
<dbReference type="SUPFAM" id="SSF50978">
    <property type="entry name" value="WD40 repeat-like"/>
    <property type="match status" value="1"/>
</dbReference>
<dbReference type="PROSITE" id="PS00678">
    <property type="entry name" value="WD_REPEATS_1"/>
    <property type="match status" value="1"/>
</dbReference>
<dbReference type="PROSITE" id="PS50082">
    <property type="entry name" value="WD_REPEATS_2"/>
    <property type="match status" value="2"/>
</dbReference>
<dbReference type="PROSITE" id="PS50294">
    <property type="entry name" value="WD_REPEATS_REGION"/>
    <property type="match status" value="2"/>
</dbReference>
<sequence>MARNSIKKSPVVKKKDTPIVRKRKPIQQEAEEDSNDEESEDELNVEGLIDASDDEDEEEEQEQEEQPQEEENNSDDDDDDDDDDDDNNSEADSEEELNQLLGEEEEEDPSDYNSDEFSDEPKDDDLSRINIKSLSVSDPSIQKNSISKFSDGSIRILKPEIEPKYDSDDSDAENFNTIGNIPISAYDEMPHIGYDINGKRIMRPAKGSALDQLLESIDLPEGWTGLLDQNTGTSLKLTDEELELIRKIQQQENTDENINPYEPLIDWFTKDEEIMPVTAVPEPKRRFVPSKHEAKRVMKIVKAIREGRIIPPNKVKQQLTEEEEEDQFNFDLWQDEIEISDHIMNLRAPKLPPPTNEESYNPPEEYLLTEEEKSKWLQESPIDRERNFLPQKYNSLRQVPGYQDSVRERFERSLDLYLAPRVRHNKLNIDPDSLIPDLPSPKDLRPFPIRCSTIYEGHTGKIRTISIDPQGLWLATGSDDGSVRIWEILTGRQVYKIQLINKEINNEDHIECLEWNPDSSCGILAVCVGENIYLIVPPIFGFDIENSGKLRIESGWGYDTFGNKKKDLKISSQKEEDNKESDNEDEDEEEDNDDDDDDDEPETSSTVEPKKEVAKWYPPNTEQASMGISAIIQCRKTIKKLSWHRKGDYFVTVSPDSKNTAVLIHQISKHLSQSPFKKSKGIIMDAKFHPFKPQLFVASQRQIKIYDLAQQVLLKKLMPGVRLLSTIDIHPRGDNLIAGSYDKRVLWHDLDLSATPYKTLRYHEKAVRSIKFHKGNLPLFASASDDGNIHIFHGTVYDDLMTNPLLVPLKKLNGHKIINQIGILDLIWHPKEPWLFSAGADGTARLWTT</sequence>
<organism>
    <name type="scientific">Candida albicans (strain SC5314 / ATCC MYA-2876)</name>
    <name type="common">Yeast</name>
    <dbReference type="NCBI Taxonomy" id="237561"/>
    <lineage>
        <taxon>Eukaryota</taxon>
        <taxon>Fungi</taxon>
        <taxon>Dikarya</taxon>
        <taxon>Ascomycota</taxon>
        <taxon>Saccharomycotina</taxon>
        <taxon>Pichiomycetes</taxon>
        <taxon>Debaryomycetaceae</taxon>
        <taxon>Candida/Lodderomyces clade</taxon>
        <taxon>Candida</taxon>
    </lineage>
</organism>
<keyword id="KW-0539">Nucleus</keyword>
<keyword id="KW-1185">Reference proteome</keyword>
<keyword id="KW-0677">Repeat</keyword>
<keyword id="KW-0690">Ribosome biogenesis</keyword>
<keyword id="KW-0698">rRNA processing</keyword>
<keyword id="KW-0853">WD repeat</keyword>
<gene>
    <name evidence="2" type="primary">ERB1</name>
    <name type="ordered locus">CAALFM_C104130WA</name>
    <name type="ORF">CaO19.1047</name>
    <name type="ORF">CaO19.8649</name>
</gene>
<reference key="1">
    <citation type="journal article" date="2004" name="Proc. Natl. Acad. Sci. U.S.A.">
        <title>The diploid genome sequence of Candida albicans.</title>
        <authorList>
            <person name="Jones T."/>
            <person name="Federspiel N.A."/>
            <person name="Chibana H."/>
            <person name="Dungan J."/>
            <person name="Kalman S."/>
            <person name="Magee B.B."/>
            <person name="Newport G."/>
            <person name="Thorstenson Y.R."/>
            <person name="Agabian N."/>
            <person name="Magee P.T."/>
            <person name="Davis R.W."/>
            <person name="Scherer S."/>
        </authorList>
    </citation>
    <scope>NUCLEOTIDE SEQUENCE [LARGE SCALE GENOMIC DNA]</scope>
    <source>
        <strain>SC5314 / ATCC MYA-2876</strain>
    </source>
</reference>
<reference key="2">
    <citation type="journal article" date="2007" name="Genome Biol.">
        <title>Assembly of the Candida albicans genome into sixteen supercontigs aligned on the eight chromosomes.</title>
        <authorList>
            <person name="van het Hoog M."/>
            <person name="Rast T.J."/>
            <person name="Martchenko M."/>
            <person name="Grindle S."/>
            <person name="Dignard D."/>
            <person name="Hogues H."/>
            <person name="Cuomo C."/>
            <person name="Berriman M."/>
            <person name="Scherer S."/>
            <person name="Magee B.B."/>
            <person name="Whiteway M."/>
            <person name="Chibana H."/>
            <person name="Nantel A."/>
            <person name="Magee P.T."/>
        </authorList>
    </citation>
    <scope>GENOME REANNOTATION</scope>
    <source>
        <strain>SC5314 / ATCC MYA-2876</strain>
    </source>
</reference>
<reference key="3">
    <citation type="journal article" date="2013" name="Genome Biol.">
        <title>Assembly of a phased diploid Candida albicans genome facilitates allele-specific measurements and provides a simple model for repeat and indel structure.</title>
        <authorList>
            <person name="Muzzey D."/>
            <person name="Schwartz K."/>
            <person name="Weissman J.S."/>
            <person name="Sherlock G."/>
        </authorList>
    </citation>
    <scope>NUCLEOTIDE SEQUENCE [LARGE SCALE GENOMIC DNA]</scope>
    <scope>GENOME REANNOTATION</scope>
    <source>
        <strain>SC5314 / ATCC MYA-2876</strain>
    </source>
</reference>
<protein>
    <recommendedName>
        <fullName evidence="2">Ribosome biogenesis protein ERB1</fullName>
    </recommendedName>
    <alternativeName>
        <fullName evidence="2">Eukaryotic ribosome biogenesis protein 1</fullName>
    </alternativeName>
</protein>
<feature type="chain" id="PRO_0000370423" description="Ribosome biogenesis protein ERB1">
    <location>
        <begin position="1"/>
        <end position="849"/>
    </location>
</feature>
<feature type="repeat" description="WD 1">
    <location>
        <begin position="457"/>
        <end position="496"/>
    </location>
</feature>
<feature type="repeat" description="WD 2">
    <location>
        <begin position="505"/>
        <end position="545"/>
    </location>
</feature>
<feature type="repeat" description="WD 3">
    <location>
        <begin position="633"/>
        <end position="675"/>
    </location>
</feature>
<feature type="repeat" description="WD 4">
    <location>
        <begin position="678"/>
        <end position="716"/>
    </location>
</feature>
<feature type="repeat" description="WD 5">
    <location>
        <begin position="719"/>
        <end position="758"/>
    </location>
</feature>
<feature type="repeat" description="WD 6">
    <location>
        <begin position="762"/>
        <end position="802"/>
    </location>
</feature>
<feature type="repeat" description="WD 7">
    <location>
        <begin position="818"/>
        <end position="849"/>
    </location>
</feature>
<feature type="region of interest" description="Disordered" evidence="3">
    <location>
        <begin position="1"/>
        <end position="130"/>
    </location>
</feature>
<feature type="region of interest" description="Required for interaction with NOP7" evidence="1">
    <location>
        <begin position="286"/>
        <end position="405"/>
    </location>
</feature>
<feature type="region of interest" description="Required for interaction with YTM1" evidence="1">
    <location>
        <begin position="405"/>
        <end position="441"/>
    </location>
</feature>
<feature type="region of interest" description="Disordered" evidence="3">
    <location>
        <begin position="569"/>
        <end position="619"/>
    </location>
</feature>
<feature type="compositionally biased region" description="Acidic residues" evidence="3">
    <location>
        <begin position="29"/>
        <end position="44"/>
    </location>
</feature>
<feature type="compositionally biased region" description="Acidic residues" evidence="3">
    <location>
        <begin position="51"/>
        <end position="123"/>
    </location>
</feature>
<feature type="compositionally biased region" description="Basic and acidic residues" evidence="3">
    <location>
        <begin position="569"/>
        <end position="581"/>
    </location>
</feature>
<feature type="compositionally biased region" description="Acidic residues" evidence="3">
    <location>
        <begin position="582"/>
        <end position="602"/>
    </location>
</feature>
<name>ERB1_CANAL</name>
<evidence type="ECO:0000250" key="1"/>
<evidence type="ECO:0000255" key="2">
    <source>
        <dbReference type="HAMAP-Rule" id="MF_03027"/>
    </source>
</evidence>
<evidence type="ECO:0000256" key="3">
    <source>
        <dbReference type="SAM" id="MobiDB-lite"/>
    </source>
</evidence>
<comment type="function">
    <text evidence="2">Component of the NOP7 complex, which is required for maturation of the 25S and 5.8S ribosomal RNAs and formation of the 60S ribosome.</text>
</comment>
<comment type="subunit">
    <text evidence="2">Component of the NOP7 complex, composed of ERB1, NOP7 and YTM1. The complex is held together by ERB1, which interacts with NOP7 via its N-terminal domain and with YTM1 via a high-affinity interaction between the seven-bladed beta-propeller domains of the 2 proteins. The NOP7 complex associates with the 66S pre-ribosome.</text>
</comment>
<comment type="subcellular location">
    <subcellularLocation>
        <location evidence="2">Nucleus</location>
        <location evidence="2">Nucleolus</location>
    </subcellularLocation>
    <subcellularLocation>
        <location evidence="2">Nucleus</location>
        <location evidence="2">Nucleoplasm</location>
    </subcellularLocation>
</comment>
<comment type="similarity">
    <text evidence="2">Belongs to the WD repeat BOP1/ERB1 family.</text>
</comment>
<proteinExistence type="inferred from homology"/>
<accession>Q59VP7</accession>
<accession>A0A1D8PD96</accession>